<sequence>MAEKRDYYEVLGVSKNATDDELKKAYRKKAIQYHPDKNPGDKEAEEHFKEVAEAYDVLSDPQKRSQYDQFGHAGLGGAAGGGFSGGGMSMEDIFSRFGDLFGGFGGFGGFSDMGGGSRRRVRRGSDLRVRVKLSLADISKGVEKKVKVKKQVVCSKCRGDGTEEANGKTTCQTCHGTGVVTRVSNTFLGAMQTQSTCPTCHGEGEIITKPCSKCKGEGVEIGEEVISFHIPAGVAEGMQMSVNGKGNAAPRGGVNGDLIVVIAEEPDPNLIRNGNDLIYNLLISVPLAIKGGSVEVPTIDGRAKIRIEAGTQPGKMLRLRNKGLPSVNGYGMGDQLVNVNVYIPESIDAKDEQAIAAMENSDSFKPTDAARKDIDKKYREMLD</sequence>
<feature type="chain" id="PRO_0000070852" description="Chaperone protein DnaJ">
    <location>
        <begin position="1"/>
        <end position="383"/>
    </location>
</feature>
<feature type="domain" description="J" evidence="1">
    <location>
        <begin position="6"/>
        <end position="71"/>
    </location>
</feature>
<feature type="repeat" description="CXXCXGXG motif">
    <location>
        <begin position="154"/>
        <end position="161"/>
    </location>
</feature>
<feature type="repeat" description="CXXCXGXG motif">
    <location>
        <begin position="171"/>
        <end position="178"/>
    </location>
</feature>
<feature type="repeat" description="CXXCXGXG motif">
    <location>
        <begin position="197"/>
        <end position="204"/>
    </location>
</feature>
<feature type="repeat" description="CXXCXGXG motif">
    <location>
        <begin position="211"/>
        <end position="218"/>
    </location>
</feature>
<feature type="zinc finger region" description="CR-type" evidence="1">
    <location>
        <begin position="141"/>
        <end position="223"/>
    </location>
</feature>
<feature type="binding site" evidence="1">
    <location>
        <position position="154"/>
    </location>
    <ligand>
        <name>Zn(2+)</name>
        <dbReference type="ChEBI" id="CHEBI:29105"/>
        <label>1</label>
    </ligand>
</feature>
<feature type="binding site" evidence="1">
    <location>
        <position position="157"/>
    </location>
    <ligand>
        <name>Zn(2+)</name>
        <dbReference type="ChEBI" id="CHEBI:29105"/>
        <label>1</label>
    </ligand>
</feature>
<feature type="binding site" evidence="1">
    <location>
        <position position="171"/>
    </location>
    <ligand>
        <name>Zn(2+)</name>
        <dbReference type="ChEBI" id="CHEBI:29105"/>
        <label>2</label>
    </ligand>
</feature>
<feature type="binding site" evidence="1">
    <location>
        <position position="174"/>
    </location>
    <ligand>
        <name>Zn(2+)</name>
        <dbReference type="ChEBI" id="CHEBI:29105"/>
        <label>2</label>
    </ligand>
</feature>
<feature type="binding site" evidence="1">
    <location>
        <position position="197"/>
    </location>
    <ligand>
        <name>Zn(2+)</name>
        <dbReference type="ChEBI" id="CHEBI:29105"/>
        <label>2</label>
    </ligand>
</feature>
<feature type="binding site" evidence="1">
    <location>
        <position position="200"/>
    </location>
    <ligand>
        <name>Zn(2+)</name>
        <dbReference type="ChEBI" id="CHEBI:29105"/>
        <label>2</label>
    </ligand>
</feature>
<feature type="binding site" evidence="1">
    <location>
        <position position="211"/>
    </location>
    <ligand>
        <name>Zn(2+)</name>
        <dbReference type="ChEBI" id="CHEBI:29105"/>
        <label>1</label>
    </ligand>
</feature>
<feature type="binding site" evidence="1">
    <location>
        <position position="214"/>
    </location>
    <ligand>
        <name>Zn(2+)</name>
        <dbReference type="ChEBI" id="CHEBI:29105"/>
        <label>1</label>
    </ligand>
</feature>
<accession>Q9XCA6</accession>
<dbReference type="EMBL" id="AF145797">
    <property type="protein sequence ID" value="AAD39493.1"/>
    <property type="molecule type" value="Genomic_DNA"/>
</dbReference>
<dbReference type="EMBL" id="AE015924">
    <property type="protein sequence ID" value="AAQ66777.1"/>
    <property type="molecule type" value="Genomic_DNA"/>
</dbReference>
<dbReference type="RefSeq" id="WP_005873727.1">
    <property type="nucleotide sequence ID" value="NC_002950.2"/>
</dbReference>
<dbReference type="SMR" id="Q9XCA6"/>
<dbReference type="STRING" id="242619.PG_1776"/>
<dbReference type="EnsemblBacteria" id="AAQ66777">
    <property type="protein sequence ID" value="AAQ66777"/>
    <property type="gene ID" value="PG_1776"/>
</dbReference>
<dbReference type="KEGG" id="pgi:PG_1776"/>
<dbReference type="PATRIC" id="fig|242619.8.peg.1643"/>
<dbReference type="eggNOG" id="COG0484">
    <property type="taxonomic scope" value="Bacteria"/>
</dbReference>
<dbReference type="HOGENOM" id="CLU_017633_0_7_10"/>
<dbReference type="BioCyc" id="PGIN242619:G1G02-1657-MONOMER"/>
<dbReference type="Proteomes" id="UP000000588">
    <property type="component" value="Chromosome"/>
</dbReference>
<dbReference type="GO" id="GO:0005737">
    <property type="term" value="C:cytoplasm"/>
    <property type="evidence" value="ECO:0007669"/>
    <property type="project" value="UniProtKB-SubCell"/>
</dbReference>
<dbReference type="GO" id="GO:0005524">
    <property type="term" value="F:ATP binding"/>
    <property type="evidence" value="ECO:0007669"/>
    <property type="project" value="InterPro"/>
</dbReference>
<dbReference type="GO" id="GO:0031072">
    <property type="term" value="F:heat shock protein binding"/>
    <property type="evidence" value="ECO:0007669"/>
    <property type="project" value="InterPro"/>
</dbReference>
<dbReference type="GO" id="GO:0051082">
    <property type="term" value="F:unfolded protein binding"/>
    <property type="evidence" value="ECO:0007669"/>
    <property type="project" value="UniProtKB-UniRule"/>
</dbReference>
<dbReference type="GO" id="GO:0008270">
    <property type="term" value="F:zinc ion binding"/>
    <property type="evidence" value="ECO:0007669"/>
    <property type="project" value="UniProtKB-UniRule"/>
</dbReference>
<dbReference type="GO" id="GO:0051085">
    <property type="term" value="P:chaperone cofactor-dependent protein refolding"/>
    <property type="evidence" value="ECO:0007669"/>
    <property type="project" value="TreeGrafter"/>
</dbReference>
<dbReference type="GO" id="GO:0006260">
    <property type="term" value="P:DNA replication"/>
    <property type="evidence" value="ECO:0007669"/>
    <property type="project" value="UniProtKB-KW"/>
</dbReference>
<dbReference type="GO" id="GO:0042026">
    <property type="term" value="P:protein refolding"/>
    <property type="evidence" value="ECO:0007669"/>
    <property type="project" value="TreeGrafter"/>
</dbReference>
<dbReference type="GO" id="GO:0009408">
    <property type="term" value="P:response to heat"/>
    <property type="evidence" value="ECO:0007669"/>
    <property type="project" value="InterPro"/>
</dbReference>
<dbReference type="CDD" id="cd06257">
    <property type="entry name" value="DnaJ"/>
    <property type="match status" value="1"/>
</dbReference>
<dbReference type="CDD" id="cd10747">
    <property type="entry name" value="DnaJ_C"/>
    <property type="match status" value="1"/>
</dbReference>
<dbReference type="CDD" id="cd10719">
    <property type="entry name" value="DnaJ_zf"/>
    <property type="match status" value="1"/>
</dbReference>
<dbReference type="FunFam" id="1.10.287.110:FF:000034">
    <property type="entry name" value="Chaperone protein DnaJ"/>
    <property type="match status" value="1"/>
</dbReference>
<dbReference type="FunFam" id="2.60.260.20:FF:000005">
    <property type="entry name" value="Chaperone protein dnaJ 1, mitochondrial"/>
    <property type="match status" value="1"/>
</dbReference>
<dbReference type="FunFam" id="2.10.230.10:FF:000002">
    <property type="entry name" value="Molecular chaperone DnaJ"/>
    <property type="match status" value="1"/>
</dbReference>
<dbReference type="Gene3D" id="1.10.287.110">
    <property type="entry name" value="DnaJ domain"/>
    <property type="match status" value="1"/>
</dbReference>
<dbReference type="Gene3D" id="2.10.230.10">
    <property type="entry name" value="Heat shock protein DnaJ, cysteine-rich domain"/>
    <property type="match status" value="1"/>
</dbReference>
<dbReference type="Gene3D" id="2.60.260.20">
    <property type="entry name" value="Urease metallochaperone UreE, N-terminal domain"/>
    <property type="match status" value="2"/>
</dbReference>
<dbReference type="HAMAP" id="MF_01152">
    <property type="entry name" value="DnaJ"/>
    <property type="match status" value="1"/>
</dbReference>
<dbReference type="InterPro" id="IPR012724">
    <property type="entry name" value="DnaJ"/>
</dbReference>
<dbReference type="InterPro" id="IPR002939">
    <property type="entry name" value="DnaJ_C"/>
</dbReference>
<dbReference type="InterPro" id="IPR001623">
    <property type="entry name" value="DnaJ_domain"/>
</dbReference>
<dbReference type="InterPro" id="IPR018253">
    <property type="entry name" value="DnaJ_domain_CS"/>
</dbReference>
<dbReference type="InterPro" id="IPR008971">
    <property type="entry name" value="HSP40/DnaJ_pept-bd"/>
</dbReference>
<dbReference type="InterPro" id="IPR001305">
    <property type="entry name" value="HSP_DnaJ_Cys-rich_dom"/>
</dbReference>
<dbReference type="InterPro" id="IPR036410">
    <property type="entry name" value="HSP_DnaJ_Cys-rich_dom_sf"/>
</dbReference>
<dbReference type="InterPro" id="IPR036869">
    <property type="entry name" value="J_dom_sf"/>
</dbReference>
<dbReference type="NCBIfam" id="TIGR02349">
    <property type="entry name" value="DnaJ_bact"/>
    <property type="match status" value="1"/>
</dbReference>
<dbReference type="NCBIfam" id="NF008035">
    <property type="entry name" value="PRK10767.1"/>
    <property type="match status" value="1"/>
</dbReference>
<dbReference type="NCBIfam" id="NF010882">
    <property type="entry name" value="PRK14289.1"/>
    <property type="match status" value="1"/>
</dbReference>
<dbReference type="PANTHER" id="PTHR43096:SF48">
    <property type="entry name" value="CHAPERONE PROTEIN DNAJ"/>
    <property type="match status" value="1"/>
</dbReference>
<dbReference type="PANTHER" id="PTHR43096">
    <property type="entry name" value="DNAJ HOMOLOG 1, MITOCHONDRIAL-RELATED"/>
    <property type="match status" value="1"/>
</dbReference>
<dbReference type="Pfam" id="PF00226">
    <property type="entry name" value="DnaJ"/>
    <property type="match status" value="1"/>
</dbReference>
<dbReference type="Pfam" id="PF01556">
    <property type="entry name" value="DnaJ_C"/>
    <property type="match status" value="1"/>
</dbReference>
<dbReference type="Pfam" id="PF00684">
    <property type="entry name" value="DnaJ_CXXCXGXG"/>
    <property type="match status" value="1"/>
</dbReference>
<dbReference type="PRINTS" id="PR00625">
    <property type="entry name" value="JDOMAIN"/>
</dbReference>
<dbReference type="SMART" id="SM00271">
    <property type="entry name" value="DnaJ"/>
    <property type="match status" value="1"/>
</dbReference>
<dbReference type="SUPFAM" id="SSF46565">
    <property type="entry name" value="Chaperone J-domain"/>
    <property type="match status" value="1"/>
</dbReference>
<dbReference type="SUPFAM" id="SSF57938">
    <property type="entry name" value="DnaJ/Hsp40 cysteine-rich domain"/>
    <property type="match status" value="1"/>
</dbReference>
<dbReference type="SUPFAM" id="SSF49493">
    <property type="entry name" value="HSP40/DnaJ peptide-binding domain"/>
    <property type="match status" value="2"/>
</dbReference>
<dbReference type="PROSITE" id="PS00636">
    <property type="entry name" value="DNAJ_1"/>
    <property type="match status" value="1"/>
</dbReference>
<dbReference type="PROSITE" id="PS50076">
    <property type="entry name" value="DNAJ_2"/>
    <property type="match status" value="1"/>
</dbReference>
<dbReference type="PROSITE" id="PS51188">
    <property type="entry name" value="ZF_CR"/>
    <property type="match status" value="1"/>
</dbReference>
<gene>
    <name evidence="1" type="primary">dnaJ</name>
    <name type="ordered locus">PG_1776</name>
</gene>
<comment type="function">
    <text evidence="1">Participates actively in the response to hyperosmotic and heat shock by preventing the aggregation of stress-denatured proteins and by disaggregating proteins, also in an autonomous, DnaK-independent fashion. Unfolded proteins bind initially to DnaJ; upon interaction with the DnaJ-bound protein, DnaK hydrolyzes its bound ATP, resulting in the formation of a stable complex. GrpE releases ADP from DnaK; ATP binding to DnaK triggers the release of the substrate protein, thus completing the reaction cycle. Several rounds of ATP-dependent interactions between DnaJ, DnaK and GrpE are required for fully efficient folding. Also involved, together with DnaK and GrpE, in the DNA replication of plasmids through activation of initiation proteins.</text>
</comment>
<comment type="cofactor">
    <cofactor evidence="1">
        <name>Zn(2+)</name>
        <dbReference type="ChEBI" id="CHEBI:29105"/>
    </cofactor>
    <text evidence="1">Binds 2 Zn(2+) ions per monomer.</text>
</comment>
<comment type="subunit">
    <text evidence="1">Homodimer.</text>
</comment>
<comment type="subcellular location">
    <subcellularLocation>
        <location evidence="1">Cytoplasm</location>
    </subcellularLocation>
</comment>
<comment type="induction">
    <text evidence="2">Low level background expression induced by oxidative stress due to hydrogen peroxide.</text>
</comment>
<comment type="domain">
    <text evidence="1">The J domain is necessary and sufficient to stimulate DnaK ATPase activity. Zinc center 1 plays an important role in the autonomous, DnaK-independent chaperone activity of DnaJ. Zinc center 2 is essential for interaction with DnaK and for DnaJ activity.</text>
</comment>
<comment type="miscellaneous">
    <text evidence="2">The grpE-dnaJ-PG1777-PG1778-PG1779 genes are co-transcribed and may form an operon.</text>
</comment>
<comment type="similarity">
    <text evidence="1">Belongs to the DnaJ family.</text>
</comment>
<proteinExistence type="evidence at transcript level"/>
<name>DNAJ_PORGI</name>
<reference key="1">
    <citation type="submission" date="1999-04" db="EMBL/GenBank/DDBJ databases">
        <title>Porphyromonas gingivalis polypeptides and nucleic acids.</title>
        <authorList>
            <person name="Ross B.C."/>
            <person name="Barr I."/>
            <person name="Patterson M."/>
            <person name="Agius C."/>
            <person name="Rothel L."/>
            <person name="Margetts M."/>
            <person name="Hocking D."/>
            <person name="Webb E."/>
        </authorList>
    </citation>
    <scope>NUCLEOTIDE SEQUENCE [GENOMIC DNA]</scope>
    <source>
        <strain>ATCC 53978 / W50</strain>
    </source>
</reference>
<reference key="2">
    <citation type="journal article" date="2003" name="J. Bacteriol.">
        <title>Complete genome sequence of the oral pathogenic bacterium Porphyromonas gingivalis strain W83.</title>
        <authorList>
            <person name="Nelson K.E."/>
            <person name="Fleischmann R.D."/>
            <person name="DeBoy R.T."/>
            <person name="Paulsen I.T."/>
            <person name="Fouts D.E."/>
            <person name="Eisen J.A."/>
            <person name="Daugherty S.C."/>
            <person name="Dodson R.J."/>
            <person name="Durkin A.S."/>
            <person name="Gwinn M.L."/>
            <person name="Haft D.H."/>
            <person name="Kolonay J.F."/>
            <person name="Nelson W.C."/>
            <person name="Mason T.M."/>
            <person name="Tallon L."/>
            <person name="Gray J."/>
            <person name="Granger D."/>
            <person name="Tettelin H."/>
            <person name="Dong H."/>
            <person name="Galvin J.L."/>
            <person name="Duncan M.J."/>
            <person name="Dewhirst F.E."/>
            <person name="Fraser C.M."/>
        </authorList>
    </citation>
    <scope>NUCLEOTIDE SEQUENCE [LARGE SCALE GENOMIC DNA]</scope>
    <source>
        <strain>ATCC BAA-308 / W83</strain>
    </source>
</reference>
<reference key="3">
    <citation type="journal article" date="2016" name="Microbiology">
        <title>Role of the Porphyromonas gingivalis iron-binding protein PG1777 in oxidative stress resistance.</title>
        <authorList>
            <person name="McKenzie R.M.E."/>
            <person name="Henry L.G."/>
            <person name="Boutrin M.C."/>
            <person name="Ximinies A."/>
            <person name="Fletcher H.M."/>
        </authorList>
    </citation>
    <scope>INDUCTION BY HYDROGEN PEROXIDE</scope>
</reference>
<organism>
    <name type="scientific">Porphyromonas gingivalis (strain ATCC BAA-308 / W83)</name>
    <dbReference type="NCBI Taxonomy" id="242619"/>
    <lineage>
        <taxon>Bacteria</taxon>
        <taxon>Pseudomonadati</taxon>
        <taxon>Bacteroidota</taxon>
        <taxon>Bacteroidia</taxon>
        <taxon>Bacteroidales</taxon>
        <taxon>Porphyromonadaceae</taxon>
        <taxon>Porphyromonas</taxon>
    </lineage>
</organism>
<protein>
    <recommendedName>
        <fullName evidence="1">Chaperone protein DnaJ</fullName>
    </recommendedName>
</protein>
<keyword id="KW-0143">Chaperone</keyword>
<keyword id="KW-0963">Cytoplasm</keyword>
<keyword id="KW-0235">DNA replication</keyword>
<keyword id="KW-0479">Metal-binding</keyword>
<keyword id="KW-1185">Reference proteome</keyword>
<keyword id="KW-0677">Repeat</keyword>
<keyword id="KW-0346">Stress response</keyword>
<keyword id="KW-0862">Zinc</keyword>
<keyword id="KW-0863">Zinc-finger</keyword>
<evidence type="ECO:0000255" key="1">
    <source>
        <dbReference type="HAMAP-Rule" id="MF_01152"/>
    </source>
</evidence>
<evidence type="ECO:0000269" key="2">
    <source>
    </source>
</evidence>